<organism>
    <name type="scientific">Pseudomonas syringae pv. tomato (strain ATCC BAA-871 / DC3000)</name>
    <dbReference type="NCBI Taxonomy" id="223283"/>
    <lineage>
        <taxon>Bacteria</taxon>
        <taxon>Pseudomonadati</taxon>
        <taxon>Pseudomonadota</taxon>
        <taxon>Gammaproteobacteria</taxon>
        <taxon>Pseudomonadales</taxon>
        <taxon>Pseudomonadaceae</taxon>
        <taxon>Pseudomonas</taxon>
    </lineage>
</organism>
<feature type="chain" id="PRO_0000189144" description="1-deoxy-D-xylulose-5-phosphate synthase">
    <location>
        <begin position="1"/>
        <end position="631"/>
    </location>
</feature>
<feature type="binding site" evidence="1">
    <location>
        <position position="87"/>
    </location>
    <ligand>
        <name>thiamine diphosphate</name>
        <dbReference type="ChEBI" id="CHEBI:58937"/>
    </ligand>
</feature>
<feature type="binding site" evidence="1">
    <location>
        <begin position="128"/>
        <end position="130"/>
    </location>
    <ligand>
        <name>thiamine diphosphate</name>
        <dbReference type="ChEBI" id="CHEBI:58937"/>
    </ligand>
</feature>
<feature type="binding site" evidence="1">
    <location>
        <position position="159"/>
    </location>
    <ligand>
        <name>Mg(2+)</name>
        <dbReference type="ChEBI" id="CHEBI:18420"/>
    </ligand>
</feature>
<feature type="binding site" evidence="1">
    <location>
        <begin position="160"/>
        <end position="161"/>
    </location>
    <ligand>
        <name>thiamine diphosphate</name>
        <dbReference type="ChEBI" id="CHEBI:58937"/>
    </ligand>
</feature>
<feature type="binding site" evidence="1">
    <location>
        <position position="188"/>
    </location>
    <ligand>
        <name>Mg(2+)</name>
        <dbReference type="ChEBI" id="CHEBI:18420"/>
    </ligand>
</feature>
<feature type="binding site" evidence="1">
    <location>
        <position position="188"/>
    </location>
    <ligand>
        <name>thiamine diphosphate</name>
        <dbReference type="ChEBI" id="CHEBI:58937"/>
    </ligand>
</feature>
<feature type="binding site" evidence="1">
    <location>
        <position position="295"/>
    </location>
    <ligand>
        <name>thiamine diphosphate</name>
        <dbReference type="ChEBI" id="CHEBI:58937"/>
    </ligand>
</feature>
<feature type="binding site" evidence="1">
    <location>
        <position position="378"/>
    </location>
    <ligand>
        <name>thiamine diphosphate</name>
        <dbReference type="ChEBI" id="CHEBI:58937"/>
    </ligand>
</feature>
<keyword id="KW-0414">Isoprene biosynthesis</keyword>
<keyword id="KW-0460">Magnesium</keyword>
<keyword id="KW-0479">Metal-binding</keyword>
<keyword id="KW-1185">Reference proteome</keyword>
<keyword id="KW-0784">Thiamine biosynthesis</keyword>
<keyword id="KW-0786">Thiamine pyrophosphate</keyword>
<keyword id="KW-0808">Transferase</keyword>
<dbReference type="EC" id="2.2.1.7" evidence="1"/>
<dbReference type="EMBL" id="AE016853">
    <property type="protein sequence ID" value="AAO54240.1"/>
    <property type="molecule type" value="Genomic_DNA"/>
</dbReference>
<dbReference type="RefSeq" id="NP_790545.1">
    <property type="nucleotide sequence ID" value="NC_004578.1"/>
</dbReference>
<dbReference type="RefSeq" id="WP_011103240.1">
    <property type="nucleotide sequence ID" value="NC_004578.1"/>
</dbReference>
<dbReference type="SMR" id="Q889Q1"/>
<dbReference type="STRING" id="223283.PSPTO_0698"/>
<dbReference type="GeneID" id="61792107"/>
<dbReference type="KEGG" id="pst:PSPTO_0698"/>
<dbReference type="PATRIC" id="fig|223283.9.peg.706"/>
<dbReference type="eggNOG" id="COG1154">
    <property type="taxonomic scope" value="Bacteria"/>
</dbReference>
<dbReference type="HOGENOM" id="CLU_009227_1_4_6"/>
<dbReference type="OrthoDB" id="9803371at2"/>
<dbReference type="PhylomeDB" id="Q889Q1"/>
<dbReference type="UniPathway" id="UPA00064">
    <property type="reaction ID" value="UER00091"/>
</dbReference>
<dbReference type="Proteomes" id="UP000002515">
    <property type="component" value="Chromosome"/>
</dbReference>
<dbReference type="GO" id="GO:0005829">
    <property type="term" value="C:cytosol"/>
    <property type="evidence" value="ECO:0007669"/>
    <property type="project" value="TreeGrafter"/>
</dbReference>
<dbReference type="GO" id="GO:0008661">
    <property type="term" value="F:1-deoxy-D-xylulose-5-phosphate synthase activity"/>
    <property type="evidence" value="ECO:0007669"/>
    <property type="project" value="UniProtKB-UniRule"/>
</dbReference>
<dbReference type="GO" id="GO:0000287">
    <property type="term" value="F:magnesium ion binding"/>
    <property type="evidence" value="ECO:0007669"/>
    <property type="project" value="UniProtKB-UniRule"/>
</dbReference>
<dbReference type="GO" id="GO:0030976">
    <property type="term" value="F:thiamine pyrophosphate binding"/>
    <property type="evidence" value="ECO:0007669"/>
    <property type="project" value="UniProtKB-UniRule"/>
</dbReference>
<dbReference type="GO" id="GO:0052865">
    <property type="term" value="P:1-deoxy-D-xylulose 5-phosphate biosynthetic process"/>
    <property type="evidence" value="ECO:0007669"/>
    <property type="project" value="UniProtKB-UniPathway"/>
</dbReference>
<dbReference type="GO" id="GO:0019288">
    <property type="term" value="P:isopentenyl diphosphate biosynthetic process, methylerythritol 4-phosphate pathway"/>
    <property type="evidence" value="ECO:0007669"/>
    <property type="project" value="TreeGrafter"/>
</dbReference>
<dbReference type="GO" id="GO:0016114">
    <property type="term" value="P:terpenoid biosynthetic process"/>
    <property type="evidence" value="ECO:0007669"/>
    <property type="project" value="UniProtKB-UniRule"/>
</dbReference>
<dbReference type="GO" id="GO:0009228">
    <property type="term" value="P:thiamine biosynthetic process"/>
    <property type="evidence" value="ECO:0007669"/>
    <property type="project" value="UniProtKB-UniRule"/>
</dbReference>
<dbReference type="CDD" id="cd02007">
    <property type="entry name" value="TPP_DXS"/>
    <property type="match status" value="1"/>
</dbReference>
<dbReference type="CDD" id="cd07033">
    <property type="entry name" value="TPP_PYR_DXS_TK_like"/>
    <property type="match status" value="1"/>
</dbReference>
<dbReference type="FunFam" id="3.40.50.920:FF:000002">
    <property type="entry name" value="1-deoxy-D-xylulose-5-phosphate synthase"/>
    <property type="match status" value="1"/>
</dbReference>
<dbReference type="FunFam" id="3.40.50.970:FF:000005">
    <property type="entry name" value="1-deoxy-D-xylulose-5-phosphate synthase"/>
    <property type="match status" value="1"/>
</dbReference>
<dbReference type="Gene3D" id="3.40.50.920">
    <property type="match status" value="1"/>
</dbReference>
<dbReference type="Gene3D" id="3.40.50.970">
    <property type="match status" value="2"/>
</dbReference>
<dbReference type="HAMAP" id="MF_00315">
    <property type="entry name" value="DXP_synth"/>
    <property type="match status" value="1"/>
</dbReference>
<dbReference type="InterPro" id="IPR005477">
    <property type="entry name" value="Dxylulose-5-P_synthase"/>
</dbReference>
<dbReference type="InterPro" id="IPR029061">
    <property type="entry name" value="THDP-binding"/>
</dbReference>
<dbReference type="InterPro" id="IPR009014">
    <property type="entry name" value="Transketo_C/PFOR_II"/>
</dbReference>
<dbReference type="InterPro" id="IPR005475">
    <property type="entry name" value="Transketolase-like_Pyr-bd"/>
</dbReference>
<dbReference type="InterPro" id="IPR020826">
    <property type="entry name" value="Transketolase_BS"/>
</dbReference>
<dbReference type="InterPro" id="IPR033248">
    <property type="entry name" value="Transketolase_C"/>
</dbReference>
<dbReference type="NCBIfam" id="TIGR00204">
    <property type="entry name" value="dxs"/>
    <property type="match status" value="1"/>
</dbReference>
<dbReference type="NCBIfam" id="NF003933">
    <property type="entry name" value="PRK05444.2-2"/>
    <property type="match status" value="1"/>
</dbReference>
<dbReference type="PANTHER" id="PTHR43322">
    <property type="entry name" value="1-D-DEOXYXYLULOSE 5-PHOSPHATE SYNTHASE-RELATED"/>
    <property type="match status" value="1"/>
</dbReference>
<dbReference type="PANTHER" id="PTHR43322:SF5">
    <property type="entry name" value="1-DEOXY-D-XYLULOSE-5-PHOSPHATE SYNTHASE, CHLOROPLASTIC"/>
    <property type="match status" value="1"/>
</dbReference>
<dbReference type="Pfam" id="PF13292">
    <property type="entry name" value="DXP_synthase_N"/>
    <property type="match status" value="1"/>
</dbReference>
<dbReference type="Pfam" id="PF02779">
    <property type="entry name" value="Transket_pyr"/>
    <property type="match status" value="1"/>
</dbReference>
<dbReference type="Pfam" id="PF02780">
    <property type="entry name" value="Transketolase_C"/>
    <property type="match status" value="1"/>
</dbReference>
<dbReference type="SMART" id="SM00861">
    <property type="entry name" value="Transket_pyr"/>
    <property type="match status" value="1"/>
</dbReference>
<dbReference type="SUPFAM" id="SSF52518">
    <property type="entry name" value="Thiamin diphosphate-binding fold (THDP-binding)"/>
    <property type="match status" value="2"/>
</dbReference>
<dbReference type="SUPFAM" id="SSF52922">
    <property type="entry name" value="TK C-terminal domain-like"/>
    <property type="match status" value="1"/>
</dbReference>
<dbReference type="PROSITE" id="PS00802">
    <property type="entry name" value="TRANSKETOLASE_2"/>
    <property type="match status" value="1"/>
</dbReference>
<evidence type="ECO:0000255" key="1">
    <source>
        <dbReference type="HAMAP-Rule" id="MF_00315"/>
    </source>
</evidence>
<name>DXS_PSESM</name>
<proteinExistence type="inferred from homology"/>
<reference key="1">
    <citation type="journal article" date="2003" name="Proc. Natl. Acad. Sci. U.S.A.">
        <title>The complete genome sequence of the Arabidopsis and tomato pathogen Pseudomonas syringae pv. tomato DC3000.</title>
        <authorList>
            <person name="Buell C.R."/>
            <person name="Joardar V."/>
            <person name="Lindeberg M."/>
            <person name="Selengut J."/>
            <person name="Paulsen I.T."/>
            <person name="Gwinn M.L."/>
            <person name="Dodson R.J."/>
            <person name="DeBoy R.T."/>
            <person name="Durkin A.S."/>
            <person name="Kolonay J.F."/>
            <person name="Madupu R."/>
            <person name="Daugherty S.C."/>
            <person name="Brinkac L.M."/>
            <person name="Beanan M.J."/>
            <person name="Haft D.H."/>
            <person name="Nelson W.C."/>
            <person name="Davidsen T.M."/>
            <person name="Zafar N."/>
            <person name="Zhou L."/>
            <person name="Liu J."/>
            <person name="Yuan Q."/>
            <person name="Khouri H.M."/>
            <person name="Fedorova N.B."/>
            <person name="Tran B."/>
            <person name="Russell D."/>
            <person name="Berry K.J."/>
            <person name="Utterback T.R."/>
            <person name="Van Aken S.E."/>
            <person name="Feldblyum T.V."/>
            <person name="D'Ascenzo M."/>
            <person name="Deng W.-L."/>
            <person name="Ramos A.R."/>
            <person name="Alfano J.R."/>
            <person name="Cartinhour S."/>
            <person name="Chatterjee A.K."/>
            <person name="Delaney T.P."/>
            <person name="Lazarowitz S.G."/>
            <person name="Martin G.B."/>
            <person name="Schneider D.J."/>
            <person name="Tang X."/>
            <person name="Bender C.L."/>
            <person name="White O."/>
            <person name="Fraser C.M."/>
            <person name="Collmer A."/>
        </authorList>
    </citation>
    <scope>NUCLEOTIDE SEQUENCE [LARGE SCALE GENOMIC DNA]</scope>
    <source>
        <strain>ATCC BAA-871 / DC3000</strain>
    </source>
</reference>
<accession>Q889Q1</accession>
<gene>
    <name evidence="1" type="primary">dxs</name>
    <name type="ordered locus">PSPTO_0698</name>
</gene>
<sequence length="631" mass="68088">MPTTFKEIPRERPVTPLLDQADTPHGLRRLGEAELETLADELRLELLYSVGQTGGHFGAGLGVIELTIALHYVFDTPDDRLVWDVGHQAYPHKILTGRRARMSTLRQKDGVAAFPRRSESEYDTFGVGHSSTSISAALGMAIASRLQGSERKSIAVIGDGALTAGMAFEALNHAPEVAANMLVILNDNDMSISRNVGGLSNYLAKILSSRTYTSMREGSKKVLSRLPGAWEIARRTEEYAKGMLVPGTLFEELGWNYIGPIDGHDLPTLIATLRNMRDLKGPQFLHVVTKKGKGFAPAEVDPIGYHAITKLEPLNAPVSVQKKVSSPKYSGVFGQWICDMAEADSRLVGITPAMKEGSDLVDFSERFPERYFDVAIAEQHAVTLAAGMACEGSKPVVAIYSTFLQRGYDQLVHDVAVQNLDVLFAIDRAGLVGEDGPTHAGSFDLSYLRCIPGIVVMTPSDENELRKLLSTGYLHTGPAAVRYPRGTGPNAVIEANLDPVEIGKGVVRRQGQGVAILVFGVQLAEALVVAEKLDATVIDMRFVKPLDEALVRETAASHELLVTLEENAVMGGAGAAVSEFLARANILKSVLHLGLPDVYVEHAKPAQMLAECGLDAEGIEAAINERLALIG</sequence>
<protein>
    <recommendedName>
        <fullName evidence="1">1-deoxy-D-xylulose-5-phosphate synthase</fullName>
        <ecNumber evidence="1">2.2.1.7</ecNumber>
    </recommendedName>
    <alternativeName>
        <fullName evidence="1">1-deoxyxylulose-5-phosphate synthase</fullName>
        <shortName evidence="1">DXP synthase</shortName>
        <shortName evidence="1">DXPS</shortName>
    </alternativeName>
</protein>
<comment type="function">
    <text evidence="1">Catalyzes the acyloin condensation reaction between C atoms 2 and 3 of pyruvate and glyceraldehyde 3-phosphate to yield 1-deoxy-D-xylulose-5-phosphate (DXP).</text>
</comment>
<comment type="catalytic activity">
    <reaction evidence="1">
        <text>D-glyceraldehyde 3-phosphate + pyruvate + H(+) = 1-deoxy-D-xylulose 5-phosphate + CO2</text>
        <dbReference type="Rhea" id="RHEA:12605"/>
        <dbReference type="ChEBI" id="CHEBI:15361"/>
        <dbReference type="ChEBI" id="CHEBI:15378"/>
        <dbReference type="ChEBI" id="CHEBI:16526"/>
        <dbReference type="ChEBI" id="CHEBI:57792"/>
        <dbReference type="ChEBI" id="CHEBI:59776"/>
        <dbReference type="EC" id="2.2.1.7"/>
    </reaction>
</comment>
<comment type="cofactor">
    <cofactor evidence="1">
        <name>Mg(2+)</name>
        <dbReference type="ChEBI" id="CHEBI:18420"/>
    </cofactor>
    <text evidence="1">Binds 1 Mg(2+) ion per subunit.</text>
</comment>
<comment type="cofactor">
    <cofactor evidence="1">
        <name>thiamine diphosphate</name>
        <dbReference type="ChEBI" id="CHEBI:58937"/>
    </cofactor>
    <text evidence="1">Binds 1 thiamine pyrophosphate per subunit.</text>
</comment>
<comment type="pathway">
    <text evidence="1">Metabolic intermediate biosynthesis; 1-deoxy-D-xylulose 5-phosphate biosynthesis; 1-deoxy-D-xylulose 5-phosphate from D-glyceraldehyde 3-phosphate and pyruvate: step 1/1.</text>
</comment>
<comment type="subunit">
    <text evidence="1">Homodimer.</text>
</comment>
<comment type="similarity">
    <text evidence="1">Belongs to the transketolase family. DXPS subfamily.</text>
</comment>